<evidence type="ECO:0000255" key="1">
    <source>
        <dbReference type="HAMAP-Rule" id="MF_00374"/>
    </source>
</evidence>
<evidence type="ECO:0000305" key="2"/>
<proteinExistence type="inferred from homology"/>
<feature type="chain" id="PRO_1000007466" description="Large ribosomal subunit protein uL29">
    <location>
        <begin position="1"/>
        <end position="62"/>
    </location>
</feature>
<protein>
    <recommendedName>
        <fullName evidence="1">Large ribosomal subunit protein uL29</fullName>
    </recommendedName>
    <alternativeName>
        <fullName evidence="2">50S ribosomal protein L29</fullName>
    </alternativeName>
</protein>
<reference key="1">
    <citation type="journal article" date="2007" name="Appl. Environ. Microbiol.">
        <title>Genome sequence of the cellulolytic gliding bacterium Cytophaga hutchinsonii.</title>
        <authorList>
            <person name="Xie G."/>
            <person name="Bruce D.C."/>
            <person name="Challacombe J.F."/>
            <person name="Chertkov O."/>
            <person name="Detter J.C."/>
            <person name="Gilna P."/>
            <person name="Han C.S."/>
            <person name="Lucas S."/>
            <person name="Misra M."/>
            <person name="Myers G.L."/>
            <person name="Richardson P."/>
            <person name="Tapia R."/>
            <person name="Thayer N."/>
            <person name="Thompson L.S."/>
            <person name="Brettin T.S."/>
            <person name="Henrissat B."/>
            <person name="Wilson D.B."/>
            <person name="McBride M.J."/>
        </authorList>
    </citation>
    <scope>NUCLEOTIDE SEQUENCE [LARGE SCALE GENOMIC DNA]</scope>
    <source>
        <strain>ATCC 33406 / DSM 1761 / JCM 20678 / CIP 103989 / IAM 12607 / NBRC 15051 / NCIMB 9469 / D465</strain>
    </source>
</reference>
<keyword id="KW-1185">Reference proteome</keyword>
<keyword id="KW-0687">Ribonucleoprotein</keyword>
<keyword id="KW-0689">Ribosomal protein</keyword>
<organism>
    <name type="scientific">Cytophaga hutchinsonii (strain ATCC 33406 / DSM 1761 / CIP 103989 / NBRC 15051 / NCIMB 9469 / D465)</name>
    <dbReference type="NCBI Taxonomy" id="269798"/>
    <lineage>
        <taxon>Bacteria</taxon>
        <taxon>Pseudomonadati</taxon>
        <taxon>Bacteroidota</taxon>
        <taxon>Cytophagia</taxon>
        <taxon>Cytophagales</taxon>
        <taxon>Cytophagaceae</taxon>
        <taxon>Cytophaga</taxon>
    </lineage>
</organism>
<comment type="similarity">
    <text evidence="1">Belongs to the universal ribosomal protein uL29 family.</text>
</comment>
<sequence>MKTAEIKGLSVEDLKQRIVAEKENLHKLKFAHAISPIENPMKISHTRKLIAQLSTELTAKSK</sequence>
<gene>
    <name evidence="1" type="primary">rpmC</name>
    <name type="ordered locus">CHU_3154</name>
</gene>
<dbReference type="EMBL" id="CP000383">
    <property type="protein sequence ID" value="ABG60394.1"/>
    <property type="molecule type" value="Genomic_DNA"/>
</dbReference>
<dbReference type="RefSeq" id="WP_011586503.1">
    <property type="nucleotide sequence ID" value="NC_008255.1"/>
</dbReference>
<dbReference type="SMR" id="Q11QC0"/>
<dbReference type="STRING" id="269798.CHU_3154"/>
<dbReference type="KEGG" id="chu:CHU_3154"/>
<dbReference type="eggNOG" id="COG0255">
    <property type="taxonomic scope" value="Bacteria"/>
</dbReference>
<dbReference type="HOGENOM" id="CLU_158491_5_1_10"/>
<dbReference type="OrthoDB" id="5296761at2"/>
<dbReference type="Proteomes" id="UP000001822">
    <property type="component" value="Chromosome"/>
</dbReference>
<dbReference type="GO" id="GO:1990904">
    <property type="term" value="C:ribonucleoprotein complex"/>
    <property type="evidence" value="ECO:0007669"/>
    <property type="project" value="UniProtKB-KW"/>
</dbReference>
<dbReference type="GO" id="GO:0005840">
    <property type="term" value="C:ribosome"/>
    <property type="evidence" value="ECO:0007669"/>
    <property type="project" value="UniProtKB-KW"/>
</dbReference>
<dbReference type="GO" id="GO:0003735">
    <property type="term" value="F:structural constituent of ribosome"/>
    <property type="evidence" value="ECO:0007669"/>
    <property type="project" value="InterPro"/>
</dbReference>
<dbReference type="GO" id="GO:0006412">
    <property type="term" value="P:translation"/>
    <property type="evidence" value="ECO:0007669"/>
    <property type="project" value="UniProtKB-UniRule"/>
</dbReference>
<dbReference type="CDD" id="cd00427">
    <property type="entry name" value="Ribosomal_L29_HIP"/>
    <property type="match status" value="1"/>
</dbReference>
<dbReference type="Gene3D" id="1.10.287.310">
    <property type="match status" value="1"/>
</dbReference>
<dbReference type="HAMAP" id="MF_00374">
    <property type="entry name" value="Ribosomal_uL29"/>
    <property type="match status" value="1"/>
</dbReference>
<dbReference type="InterPro" id="IPR001854">
    <property type="entry name" value="Ribosomal_uL29"/>
</dbReference>
<dbReference type="InterPro" id="IPR018254">
    <property type="entry name" value="Ribosomal_uL29_CS"/>
</dbReference>
<dbReference type="InterPro" id="IPR036049">
    <property type="entry name" value="Ribosomal_uL29_sf"/>
</dbReference>
<dbReference type="NCBIfam" id="TIGR00012">
    <property type="entry name" value="L29"/>
    <property type="match status" value="1"/>
</dbReference>
<dbReference type="Pfam" id="PF00831">
    <property type="entry name" value="Ribosomal_L29"/>
    <property type="match status" value="1"/>
</dbReference>
<dbReference type="SUPFAM" id="SSF46561">
    <property type="entry name" value="Ribosomal protein L29 (L29p)"/>
    <property type="match status" value="1"/>
</dbReference>
<dbReference type="PROSITE" id="PS00579">
    <property type="entry name" value="RIBOSOMAL_L29"/>
    <property type="match status" value="1"/>
</dbReference>
<accession>Q11QC0</accession>
<name>RL29_CYTH3</name>